<reference key="1">
    <citation type="journal article" date="1997" name="Nature">
        <title>The complete genome sequence of the hyperthermophilic, sulphate-reducing archaeon Archaeoglobus fulgidus.</title>
        <authorList>
            <person name="Klenk H.-P."/>
            <person name="Clayton R.A."/>
            <person name="Tomb J.-F."/>
            <person name="White O."/>
            <person name="Nelson K.E."/>
            <person name="Ketchum K.A."/>
            <person name="Dodson R.J."/>
            <person name="Gwinn M.L."/>
            <person name="Hickey E.K."/>
            <person name="Peterson J.D."/>
            <person name="Richardson D.L."/>
            <person name="Kerlavage A.R."/>
            <person name="Graham D.E."/>
            <person name="Kyrpides N.C."/>
            <person name="Fleischmann R.D."/>
            <person name="Quackenbush J."/>
            <person name="Lee N.H."/>
            <person name="Sutton G.G."/>
            <person name="Gill S.R."/>
            <person name="Kirkness E.F."/>
            <person name="Dougherty B.A."/>
            <person name="McKenney K."/>
            <person name="Adams M.D."/>
            <person name="Loftus B.J."/>
            <person name="Peterson S.N."/>
            <person name="Reich C.I."/>
            <person name="McNeil L.K."/>
            <person name="Badger J.H."/>
            <person name="Glodek A."/>
            <person name="Zhou L."/>
            <person name="Overbeek R."/>
            <person name="Gocayne J.D."/>
            <person name="Weidman J.F."/>
            <person name="McDonald L.A."/>
            <person name="Utterback T.R."/>
            <person name="Cotton M.D."/>
            <person name="Spriggs T."/>
            <person name="Artiach P."/>
            <person name="Kaine B.P."/>
            <person name="Sykes S.M."/>
            <person name="Sadow P.W."/>
            <person name="D'Andrea K.P."/>
            <person name="Bowman C."/>
            <person name="Fujii C."/>
            <person name="Garland S.A."/>
            <person name="Mason T.M."/>
            <person name="Olsen G.J."/>
            <person name="Fraser C.M."/>
            <person name="Smith H.O."/>
            <person name="Woese C.R."/>
            <person name="Venter J.C."/>
        </authorList>
    </citation>
    <scope>NUCLEOTIDE SEQUENCE [LARGE SCALE GENOMIC DNA]</scope>
    <source>
        <strain>ATCC 49558 / DSM 4304 / JCM 9628 / NBRC 100126 / VC-16</strain>
    </source>
</reference>
<protein>
    <recommendedName>
        <fullName>Probable deoxyhypusine synthase 1</fullName>
        <shortName>DHS 1</shortName>
        <ecNumber>2.5.1.46</ecNumber>
    </recommendedName>
</protein>
<feature type="chain" id="PRO_0000134490" description="Probable deoxyhypusine synthase 1">
    <location>
        <begin position="1"/>
        <end position="301"/>
    </location>
</feature>
<feature type="active site" description="Nucleophile" evidence="1">
    <location>
        <position position="269"/>
    </location>
</feature>
<name>DHYS1_ARCFU</name>
<comment type="function">
    <text evidence="1">Catalyzes the NAD-dependent oxidative cleavage of spermidine and the subsequent transfer of the butylamine moiety of spermidine to the epsilon-amino group of a specific lysine residue of the eIF-5A precursor protein to form the intermediate deoxyhypusine residue.</text>
</comment>
<comment type="catalytic activity">
    <reaction>
        <text>[eIF5A protein]-L-lysine + spermidine = [eIF5A protein]-deoxyhypusine + propane-1,3-diamine</text>
        <dbReference type="Rhea" id="RHEA:33299"/>
        <dbReference type="Rhea" id="RHEA-COMP:10143"/>
        <dbReference type="Rhea" id="RHEA-COMP:10144"/>
        <dbReference type="ChEBI" id="CHEBI:29969"/>
        <dbReference type="ChEBI" id="CHEBI:57484"/>
        <dbReference type="ChEBI" id="CHEBI:57834"/>
        <dbReference type="ChEBI" id="CHEBI:82657"/>
        <dbReference type="EC" id="2.5.1.46"/>
    </reaction>
</comment>
<comment type="cofactor">
    <cofactor evidence="1">
        <name>NAD(+)</name>
        <dbReference type="ChEBI" id="CHEBI:57540"/>
    </cofactor>
</comment>
<comment type="pathway">
    <text>Protein modification; eIF5A hypusination.</text>
</comment>
<comment type="similarity">
    <text evidence="2">Belongs to the deoxyhypusine synthase family.</text>
</comment>
<organism>
    <name type="scientific">Archaeoglobus fulgidus (strain ATCC 49558 / DSM 4304 / JCM 9628 / NBRC 100126 / VC-16)</name>
    <dbReference type="NCBI Taxonomy" id="224325"/>
    <lineage>
        <taxon>Archaea</taxon>
        <taxon>Methanobacteriati</taxon>
        <taxon>Methanobacteriota</taxon>
        <taxon>Archaeoglobi</taxon>
        <taxon>Archaeoglobales</taxon>
        <taxon>Archaeoglobaceae</taxon>
        <taxon>Archaeoglobus</taxon>
    </lineage>
</organism>
<gene>
    <name type="primary">dys1</name>
    <name type="ordered locus">AF_2195</name>
</gene>
<dbReference type="EC" id="2.5.1.46"/>
<dbReference type="EMBL" id="AE000782">
    <property type="protein sequence ID" value="AAB89061.1"/>
    <property type="molecule type" value="Genomic_DNA"/>
</dbReference>
<dbReference type="PIR" id="C69524">
    <property type="entry name" value="C69524"/>
</dbReference>
<dbReference type="RefSeq" id="WP_010879684.1">
    <property type="nucleotide sequence ID" value="NC_000917.1"/>
</dbReference>
<dbReference type="SMR" id="O28088"/>
<dbReference type="STRING" id="224325.AF_2195"/>
<dbReference type="PaxDb" id="224325-AF_2195"/>
<dbReference type="EnsemblBacteria" id="AAB89061">
    <property type="protein sequence ID" value="AAB89061"/>
    <property type="gene ID" value="AF_2195"/>
</dbReference>
<dbReference type="KEGG" id="afu:AF_2195"/>
<dbReference type="eggNOG" id="arCOG04142">
    <property type="taxonomic scope" value="Archaea"/>
</dbReference>
<dbReference type="HOGENOM" id="CLU_039781_1_0_2"/>
<dbReference type="OrthoDB" id="17730at2157"/>
<dbReference type="PhylomeDB" id="O28088"/>
<dbReference type="UniPathway" id="UPA00354"/>
<dbReference type="Proteomes" id="UP000002199">
    <property type="component" value="Chromosome"/>
</dbReference>
<dbReference type="GO" id="GO:0005737">
    <property type="term" value="C:cytoplasm"/>
    <property type="evidence" value="ECO:0007669"/>
    <property type="project" value="TreeGrafter"/>
</dbReference>
<dbReference type="GO" id="GO:0034038">
    <property type="term" value="F:deoxyhypusine synthase activity"/>
    <property type="evidence" value="ECO:0007669"/>
    <property type="project" value="UniProtKB-UniRule"/>
</dbReference>
<dbReference type="Gene3D" id="3.40.910.10">
    <property type="entry name" value="Deoxyhypusine synthase"/>
    <property type="match status" value="1"/>
</dbReference>
<dbReference type="HAMAP" id="MF_00153">
    <property type="entry name" value="DHS"/>
    <property type="match status" value="1"/>
</dbReference>
<dbReference type="InterPro" id="IPR022899">
    <property type="entry name" value="Deoxyhypus_synthase_arc"/>
</dbReference>
<dbReference type="InterPro" id="IPR002773">
    <property type="entry name" value="Deoxyhypusine_synthase"/>
</dbReference>
<dbReference type="InterPro" id="IPR036982">
    <property type="entry name" value="Deoxyhypusine_synthase_sf"/>
</dbReference>
<dbReference type="InterPro" id="IPR029035">
    <property type="entry name" value="DHS-like_NAD/FAD-binding_dom"/>
</dbReference>
<dbReference type="NCBIfam" id="TIGR00321">
    <property type="entry name" value="dhys"/>
    <property type="match status" value="1"/>
</dbReference>
<dbReference type="PANTHER" id="PTHR11703">
    <property type="entry name" value="DEOXYHYPUSINE SYNTHASE"/>
    <property type="match status" value="1"/>
</dbReference>
<dbReference type="PANTHER" id="PTHR11703:SF2">
    <property type="entry name" value="DEOXYHYPUSINE SYNTHASE-LIKE PROTEIN"/>
    <property type="match status" value="1"/>
</dbReference>
<dbReference type="Pfam" id="PF01916">
    <property type="entry name" value="DS"/>
    <property type="match status" value="1"/>
</dbReference>
<dbReference type="SUPFAM" id="SSF52467">
    <property type="entry name" value="DHS-like NAD/FAD-binding domain"/>
    <property type="match status" value="1"/>
</dbReference>
<proteinExistence type="inferred from homology"/>
<keyword id="KW-0386">Hypusine biosynthesis</keyword>
<keyword id="KW-0520">NAD</keyword>
<keyword id="KW-1185">Reference proteome</keyword>
<keyword id="KW-0808">Transferase</keyword>
<evidence type="ECO:0000250" key="1"/>
<evidence type="ECO:0000305" key="2"/>
<accession>O28088</accession>
<sequence length="301" mass="33348">MRVTSPEIQRGIKVSELLDMFGSTAFNARRLGEAAKICEEMVKSDSFVFLTLAGAMIPAGMRKIVAGMMQNGFISSLVTTGANIVHEIVESLGIGHEIGSCYVDDTALAEESINRIYDVFVGQEAFERVEEFLSGIIEGLDGIYTTYEFLWEVGKRIPDERSFLRIAAEREIPVFCPTLHDSIAGLHMTIYRKNLQIDFFRDVSRIIDFCFQKRKMGVIVVGGGVPKNFTLQAMLLAEGFDYAVQITTDSPQWGGLSGATLEEAKSWCKLKPDAKAVTVYCDATIALPMLYAYLLDRCGES</sequence>